<gene>
    <name type="ordered locus">At4g18593</name>
    <name type="ORF">F28J12.250</name>
</gene>
<sequence>MTDLQMEVEVDTNSSLQESLPKPQVMYRCKKCRRIVAIEENIVPHEPGKGEECFAWKKRSGNSEQVQCSSIFVEPMKWMQTIHDGMVEEKLLCFGCNGRLGYFNWAGMQCSCGAWVNPAFQLNKSRIDECKSEPNPNLNMET</sequence>
<accession>Q570P7</accession>
<accession>O49527</accession>
<accession>Q8LC06</accession>
<comment type="similarity">
    <text evidence="1">Belongs to the protein-tyrosine phosphatase family. Non-receptor class dual specificity subfamily.</text>
</comment>
<comment type="caution">
    <text evidence="1">Lacks the N-terminal tyrosine-protein phosphatase domain of the family. It is therefore most likely inactive.</text>
</comment>
<comment type="sequence caution" evidence="1">
    <conflict type="erroneous gene model prediction">
        <sequence resource="EMBL-CDS" id="CAA16739"/>
    </conflict>
    <text>The predicted gene At4g18590 has been split into 3 genes: At4g18590, At4g18593 and At4g18596.</text>
</comment>
<comment type="sequence caution" evidence="1">
    <conflict type="erroneous gene model prediction">
        <sequence resource="EMBL-CDS" id="CAB78861"/>
    </conflict>
    <text>The predicted gene At4g18590 has been split into 3 genes: At4g18590, At4g18593 and At4g18596.</text>
</comment>
<name>DUSL1_ARATH</name>
<evidence type="ECO:0000305" key="1"/>
<keyword id="KW-1185">Reference proteome</keyword>
<feature type="chain" id="PRO_0000422640" description="Probable inactive dual specificity protein phosphatase-like At4g18593">
    <location>
        <begin position="1"/>
        <end position="142"/>
    </location>
</feature>
<feature type="sequence conflict" description="In Ref. 5; AAM63926." evidence="1" ref="5">
    <original>M</original>
    <variation>V</variation>
    <location>
        <position position="86"/>
    </location>
</feature>
<proteinExistence type="evidence at transcript level"/>
<dbReference type="EMBL" id="AL021710">
    <property type="protein sequence ID" value="CAA16739.1"/>
    <property type="status" value="ALT_SEQ"/>
    <property type="molecule type" value="Genomic_DNA"/>
</dbReference>
<dbReference type="EMBL" id="AL161549">
    <property type="protein sequence ID" value="CAB78861.1"/>
    <property type="status" value="ALT_SEQ"/>
    <property type="molecule type" value="Genomic_DNA"/>
</dbReference>
<dbReference type="EMBL" id="CP002687">
    <property type="protein sequence ID" value="AEE84065.1"/>
    <property type="molecule type" value="Genomic_DNA"/>
</dbReference>
<dbReference type="EMBL" id="CP002687">
    <property type="protein sequence ID" value="ANM66545.1"/>
    <property type="molecule type" value="Genomic_DNA"/>
</dbReference>
<dbReference type="EMBL" id="AK220661">
    <property type="protein sequence ID" value="BAD95188.1"/>
    <property type="molecule type" value="mRNA"/>
</dbReference>
<dbReference type="EMBL" id="BT025608">
    <property type="protein sequence ID" value="ABF59026.1"/>
    <property type="molecule type" value="mRNA"/>
</dbReference>
<dbReference type="EMBL" id="AY086880">
    <property type="protein sequence ID" value="AAM63926.1"/>
    <property type="molecule type" value="mRNA"/>
</dbReference>
<dbReference type="RefSeq" id="NP_001328432.1">
    <property type="nucleotide sequence ID" value="NM_001341295.1"/>
</dbReference>
<dbReference type="RefSeq" id="NP_567561.1">
    <property type="nucleotide sequence ID" value="NM_117974.3"/>
</dbReference>
<dbReference type="SMR" id="Q570P7"/>
<dbReference type="FunCoup" id="Q570P7">
    <property type="interactions" value="134"/>
</dbReference>
<dbReference type="STRING" id="3702.Q570P7"/>
<dbReference type="PaxDb" id="3702-AT4G18593.1"/>
<dbReference type="ProteomicsDB" id="222192"/>
<dbReference type="EnsemblPlants" id="AT4G18593.1">
    <property type="protein sequence ID" value="AT4G18593.1"/>
    <property type="gene ID" value="AT4G18593"/>
</dbReference>
<dbReference type="EnsemblPlants" id="AT4G18593.2">
    <property type="protein sequence ID" value="AT4G18593.2"/>
    <property type="gene ID" value="AT4G18593"/>
</dbReference>
<dbReference type="GeneID" id="827592"/>
<dbReference type="Gramene" id="AT4G18593.1">
    <property type="protein sequence ID" value="AT4G18593.1"/>
    <property type="gene ID" value="AT4G18593"/>
</dbReference>
<dbReference type="Gramene" id="AT4G18593.2">
    <property type="protein sequence ID" value="AT4G18593.2"/>
    <property type="gene ID" value="AT4G18593"/>
</dbReference>
<dbReference type="KEGG" id="ath:AT4G18593"/>
<dbReference type="Araport" id="AT4G18593"/>
<dbReference type="TAIR" id="AT4G18593"/>
<dbReference type="eggNOG" id="KOG1716">
    <property type="taxonomic scope" value="Eukaryota"/>
</dbReference>
<dbReference type="HOGENOM" id="CLU_127950_1_0_1"/>
<dbReference type="InParanoid" id="Q570P7"/>
<dbReference type="OMA" id="TKFACKK"/>
<dbReference type="OrthoDB" id="2017893at2759"/>
<dbReference type="PhylomeDB" id="Q570P7"/>
<dbReference type="PRO" id="PR:Q570P7"/>
<dbReference type="Proteomes" id="UP000006548">
    <property type="component" value="Chromosome 4"/>
</dbReference>
<dbReference type="ExpressionAtlas" id="Q570P7">
    <property type="expression patterns" value="baseline and differential"/>
</dbReference>
<dbReference type="PANTHER" id="PTHR45848">
    <property type="entry name" value="DUAL SPECIFICITY PROTEIN PHOSPHATASE 12 FAMILY MEMBER"/>
    <property type="match status" value="1"/>
</dbReference>
<dbReference type="PANTHER" id="PTHR45848:SF6">
    <property type="entry name" value="OS02G0251700 PROTEIN"/>
    <property type="match status" value="1"/>
</dbReference>
<organism>
    <name type="scientific">Arabidopsis thaliana</name>
    <name type="common">Mouse-ear cress</name>
    <dbReference type="NCBI Taxonomy" id="3702"/>
    <lineage>
        <taxon>Eukaryota</taxon>
        <taxon>Viridiplantae</taxon>
        <taxon>Streptophyta</taxon>
        <taxon>Embryophyta</taxon>
        <taxon>Tracheophyta</taxon>
        <taxon>Spermatophyta</taxon>
        <taxon>Magnoliopsida</taxon>
        <taxon>eudicotyledons</taxon>
        <taxon>Gunneridae</taxon>
        <taxon>Pentapetalae</taxon>
        <taxon>rosids</taxon>
        <taxon>malvids</taxon>
        <taxon>Brassicales</taxon>
        <taxon>Brassicaceae</taxon>
        <taxon>Camelineae</taxon>
        <taxon>Arabidopsis</taxon>
    </lineage>
</organism>
<reference key="1">
    <citation type="journal article" date="1999" name="Nature">
        <title>Sequence and analysis of chromosome 4 of the plant Arabidopsis thaliana.</title>
        <authorList>
            <person name="Mayer K.F.X."/>
            <person name="Schueller C."/>
            <person name="Wambutt R."/>
            <person name="Murphy G."/>
            <person name="Volckaert G."/>
            <person name="Pohl T."/>
            <person name="Duesterhoeft A."/>
            <person name="Stiekema W."/>
            <person name="Entian K.-D."/>
            <person name="Terryn N."/>
            <person name="Harris B."/>
            <person name="Ansorge W."/>
            <person name="Brandt P."/>
            <person name="Grivell L.A."/>
            <person name="Rieger M."/>
            <person name="Weichselgartner M."/>
            <person name="de Simone V."/>
            <person name="Obermaier B."/>
            <person name="Mache R."/>
            <person name="Mueller M."/>
            <person name="Kreis M."/>
            <person name="Delseny M."/>
            <person name="Puigdomenech P."/>
            <person name="Watson M."/>
            <person name="Schmidtheini T."/>
            <person name="Reichert B."/>
            <person name="Portetelle D."/>
            <person name="Perez-Alonso M."/>
            <person name="Boutry M."/>
            <person name="Bancroft I."/>
            <person name="Vos P."/>
            <person name="Hoheisel J."/>
            <person name="Zimmermann W."/>
            <person name="Wedler H."/>
            <person name="Ridley P."/>
            <person name="Langham S.-A."/>
            <person name="McCullagh B."/>
            <person name="Bilham L."/>
            <person name="Robben J."/>
            <person name="van der Schueren J."/>
            <person name="Grymonprez B."/>
            <person name="Chuang Y.-J."/>
            <person name="Vandenbussche F."/>
            <person name="Braeken M."/>
            <person name="Weltjens I."/>
            <person name="Voet M."/>
            <person name="Bastiaens I."/>
            <person name="Aert R."/>
            <person name="Defoor E."/>
            <person name="Weitzenegger T."/>
            <person name="Bothe G."/>
            <person name="Ramsperger U."/>
            <person name="Hilbert H."/>
            <person name="Braun M."/>
            <person name="Holzer E."/>
            <person name="Brandt A."/>
            <person name="Peters S."/>
            <person name="van Staveren M."/>
            <person name="Dirkse W."/>
            <person name="Mooijman P."/>
            <person name="Klein Lankhorst R."/>
            <person name="Rose M."/>
            <person name="Hauf J."/>
            <person name="Koetter P."/>
            <person name="Berneiser S."/>
            <person name="Hempel S."/>
            <person name="Feldpausch M."/>
            <person name="Lamberth S."/>
            <person name="Van den Daele H."/>
            <person name="De Keyser A."/>
            <person name="Buysshaert C."/>
            <person name="Gielen J."/>
            <person name="Villarroel R."/>
            <person name="De Clercq R."/>
            <person name="van Montagu M."/>
            <person name="Rogers J."/>
            <person name="Cronin A."/>
            <person name="Quail M.A."/>
            <person name="Bray-Allen S."/>
            <person name="Clark L."/>
            <person name="Doggett J."/>
            <person name="Hall S."/>
            <person name="Kay M."/>
            <person name="Lennard N."/>
            <person name="McLay K."/>
            <person name="Mayes R."/>
            <person name="Pettett A."/>
            <person name="Rajandream M.A."/>
            <person name="Lyne M."/>
            <person name="Benes V."/>
            <person name="Rechmann S."/>
            <person name="Borkova D."/>
            <person name="Bloecker H."/>
            <person name="Scharfe M."/>
            <person name="Grimm M."/>
            <person name="Loehnert T.-H."/>
            <person name="Dose S."/>
            <person name="de Haan M."/>
            <person name="Maarse A.C."/>
            <person name="Schaefer M."/>
            <person name="Mueller-Auer S."/>
            <person name="Gabel C."/>
            <person name="Fuchs M."/>
            <person name="Fartmann B."/>
            <person name="Granderath K."/>
            <person name="Dauner D."/>
            <person name="Herzl A."/>
            <person name="Neumann S."/>
            <person name="Argiriou A."/>
            <person name="Vitale D."/>
            <person name="Liguori R."/>
            <person name="Piravandi E."/>
            <person name="Massenet O."/>
            <person name="Quigley F."/>
            <person name="Clabauld G."/>
            <person name="Muendlein A."/>
            <person name="Felber R."/>
            <person name="Schnabl S."/>
            <person name="Hiller R."/>
            <person name="Schmidt W."/>
            <person name="Lecharny A."/>
            <person name="Aubourg S."/>
            <person name="Chefdor F."/>
            <person name="Cooke R."/>
            <person name="Berger C."/>
            <person name="Monfort A."/>
            <person name="Casacuberta E."/>
            <person name="Gibbons T."/>
            <person name="Weber N."/>
            <person name="Vandenbol M."/>
            <person name="Bargues M."/>
            <person name="Terol J."/>
            <person name="Torres A."/>
            <person name="Perez-Perez A."/>
            <person name="Purnelle B."/>
            <person name="Bent E."/>
            <person name="Johnson S."/>
            <person name="Tacon D."/>
            <person name="Jesse T."/>
            <person name="Heijnen L."/>
            <person name="Schwarz S."/>
            <person name="Scholler P."/>
            <person name="Heber S."/>
            <person name="Francs P."/>
            <person name="Bielke C."/>
            <person name="Frishman D."/>
            <person name="Haase D."/>
            <person name="Lemcke K."/>
            <person name="Mewes H.-W."/>
            <person name="Stocker S."/>
            <person name="Zaccaria P."/>
            <person name="Bevan M."/>
            <person name="Wilson R.K."/>
            <person name="de la Bastide M."/>
            <person name="Habermann K."/>
            <person name="Parnell L."/>
            <person name="Dedhia N."/>
            <person name="Gnoj L."/>
            <person name="Schutz K."/>
            <person name="Huang E."/>
            <person name="Spiegel L."/>
            <person name="Sekhon M."/>
            <person name="Murray J."/>
            <person name="Sheet P."/>
            <person name="Cordes M."/>
            <person name="Abu-Threideh J."/>
            <person name="Stoneking T."/>
            <person name="Kalicki J."/>
            <person name="Graves T."/>
            <person name="Harmon G."/>
            <person name="Edwards J."/>
            <person name="Latreille P."/>
            <person name="Courtney L."/>
            <person name="Cloud J."/>
            <person name="Abbott A."/>
            <person name="Scott K."/>
            <person name="Johnson D."/>
            <person name="Minx P."/>
            <person name="Bentley D."/>
            <person name="Fulton B."/>
            <person name="Miller N."/>
            <person name="Greco T."/>
            <person name="Kemp K."/>
            <person name="Kramer J."/>
            <person name="Fulton L."/>
            <person name="Mardis E."/>
            <person name="Dante M."/>
            <person name="Pepin K."/>
            <person name="Hillier L.W."/>
            <person name="Nelson J."/>
            <person name="Spieth J."/>
            <person name="Ryan E."/>
            <person name="Andrews S."/>
            <person name="Geisel C."/>
            <person name="Layman D."/>
            <person name="Du H."/>
            <person name="Ali J."/>
            <person name="Berghoff A."/>
            <person name="Jones K."/>
            <person name="Drone K."/>
            <person name="Cotton M."/>
            <person name="Joshu C."/>
            <person name="Antonoiu B."/>
            <person name="Zidanic M."/>
            <person name="Strong C."/>
            <person name="Sun H."/>
            <person name="Lamar B."/>
            <person name="Yordan C."/>
            <person name="Ma P."/>
            <person name="Zhong J."/>
            <person name="Preston R."/>
            <person name="Vil D."/>
            <person name="Shekher M."/>
            <person name="Matero A."/>
            <person name="Shah R."/>
            <person name="Swaby I.K."/>
            <person name="O'Shaughnessy A."/>
            <person name="Rodriguez M."/>
            <person name="Hoffman J."/>
            <person name="Till S."/>
            <person name="Granat S."/>
            <person name="Shohdy N."/>
            <person name="Hasegawa A."/>
            <person name="Hameed A."/>
            <person name="Lodhi M."/>
            <person name="Johnson A."/>
            <person name="Chen E."/>
            <person name="Marra M.A."/>
            <person name="Martienssen R."/>
            <person name="McCombie W.R."/>
        </authorList>
    </citation>
    <scope>NUCLEOTIDE SEQUENCE [LARGE SCALE GENOMIC DNA]</scope>
    <source>
        <strain>cv. Columbia</strain>
    </source>
</reference>
<reference key="2">
    <citation type="journal article" date="2017" name="Plant J.">
        <title>Araport11: a complete reannotation of the Arabidopsis thaliana reference genome.</title>
        <authorList>
            <person name="Cheng C.Y."/>
            <person name="Krishnakumar V."/>
            <person name="Chan A.P."/>
            <person name="Thibaud-Nissen F."/>
            <person name="Schobel S."/>
            <person name="Town C.D."/>
        </authorList>
    </citation>
    <scope>GENOME REANNOTATION</scope>
    <source>
        <strain>cv. Columbia</strain>
    </source>
</reference>
<reference key="3">
    <citation type="submission" date="2005-03" db="EMBL/GenBank/DDBJ databases">
        <title>Large-scale analysis of RIKEN Arabidopsis full-length (RAFL) cDNAs.</title>
        <authorList>
            <person name="Totoki Y."/>
            <person name="Seki M."/>
            <person name="Ishida J."/>
            <person name="Nakajima M."/>
            <person name="Enju A."/>
            <person name="Kamiya A."/>
            <person name="Narusaka M."/>
            <person name="Shin-i T."/>
            <person name="Nakagawa M."/>
            <person name="Sakamoto N."/>
            <person name="Oishi K."/>
            <person name="Kohara Y."/>
            <person name="Kobayashi M."/>
            <person name="Toyoda A."/>
            <person name="Sakaki Y."/>
            <person name="Sakurai T."/>
            <person name="Iida K."/>
            <person name="Akiyama K."/>
            <person name="Satou M."/>
            <person name="Toyoda T."/>
            <person name="Konagaya A."/>
            <person name="Carninci P."/>
            <person name="Kawai J."/>
            <person name="Hayashizaki Y."/>
            <person name="Shinozaki K."/>
        </authorList>
    </citation>
    <scope>NUCLEOTIDE SEQUENCE [LARGE SCALE MRNA]</scope>
    <source>
        <strain>cv. Columbia</strain>
    </source>
</reference>
<reference key="4">
    <citation type="submission" date="2006-05" db="EMBL/GenBank/DDBJ databases">
        <title>Arabidopsis ORF clones.</title>
        <authorList>
            <person name="Quinitio C."/>
            <person name="Chen H."/>
            <person name="Kim C.J."/>
            <person name="Shinn P."/>
            <person name="Ecker J.R."/>
        </authorList>
    </citation>
    <scope>NUCLEOTIDE SEQUENCE [LARGE SCALE MRNA]</scope>
    <source>
        <strain>cv. Columbia</strain>
    </source>
</reference>
<reference key="5">
    <citation type="submission" date="2002-03" db="EMBL/GenBank/DDBJ databases">
        <title>Full-length cDNA from Arabidopsis thaliana.</title>
        <authorList>
            <person name="Brover V.V."/>
            <person name="Troukhan M.E."/>
            <person name="Alexandrov N.A."/>
            <person name="Lu Y.-P."/>
            <person name="Flavell R.B."/>
            <person name="Feldmann K.A."/>
        </authorList>
    </citation>
    <scope>NUCLEOTIDE SEQUENCE [LARGE SCALE MRNA]</scope>
</reference>
<protein>
    <recommendedName>
        <fullName>Probable inactive dual specificity protein phosphatase-like At4g18593</fullName>
    </recommendedName>
</protein>